<evidence type="ECO:0000255" key="1">
    <source>
        <dbReference type="HAMAP-Rule" id="MF_00636"/>
    </source>
</evidence>
<protein>
    <recommendedName>
        <fullName evidence="1">Nucleotide-binding protein BB4511</fullName>
    </recommendedName>
</protein>
<sequence length="290" mass="32517">MLRVVLITGISGSGKSVALRLLEDAGFTCIDNLPVRFLAEFIANARDDAMERVAVAIDVRSPGELAELPDVITASRAMGTSLSVIFLDANTDTLVQRYSESRRRHPLTDRLARGGKTPSLAECIALERELMAPLRDQEHVIDTSDLTPGQLRAWIRDLIQADRPPLVLTFESFAYKRGVPSDADLMFDVRCLPNPYYDRTLRPLTGRDEPVATWLGGFDIVTQMIDDIAAFIRRWLPQYTQDTRNYLTVAIGCTGGQHRSVYVVEQLARRFSDHDPLLVRHRTQLPDDPA</sequence>
<reference key="1">
    <citation type="journal article" date="2003" name="Nat. Genet.">
        <title>Comparative analysis of the genome sequences of Bordetella pertussis, Bordetella parapertussis and Bordetella bronchiseptica.</title>
        <authorList>
            <person name="Parkhill J."/>
            <person name="Sebaihia M."/>
            <person name="Preston A."/>
            <person name="Murphy L.D."/>
            <person name="Thomson N.R."/>
            <person name="Harris D.E."/>
            <person name="Holden M.T.G."/>
            <person name="Churcher C.M."/>
            <person name="Bentley S.D."/>
            <person name="Mungall K.L."/>
            <person name="Cerdeno-Tarraga A.-M."/>
            <person name="Temple L."/>
            <person name="James K.D."/>
            <person name="Harris B."/>
            <person name="Quail M.A."/>
            <person name="Achtman M."/>
            <person name="Atkin R."/>
            <person name="Baker S."/>
            <person name="Basham D."/>
            <person name="Bason N."/>
            <person name="Cherevach I."/>
            <person name="Chillingworth T."/>
            <person name="Collins M."/>
            <person name="Cronin A."/>
            <person name="Davis P."/>
            <person name="Doggett J."/>
            <person name="Feltwell T."/>
            <person name="Goble A."/>
            <person name="Hamlin N."/>
            <person name="Hauser H."/>
            <person name="Holroyd S."/>
            <person name="Jagels K."/>
            <person name="Leather S."/>
            <person name="Moule S."/>
            <person name="Norberczak H."/>
            <person name="O'Neil S."/>
            <person name="Ormond D."/>
            <person name="Price C."/>
            <person name="Rabbinowitsch E."/>
            <person name="Rutter S."/>
            <person name="Sanders M."/>
            <person name="Saunders D."/>
            <person name="Seeger K."/>
            <person name="Sharp S."/>
            <person name="Simmonds M."/>
            <person name="Skelton J."/>
            <person name="Squares R."/>
            <person name="Squares S."/>
            <person name="Stevens K."/>
            <person name="Unwin L."/>
            <person name="Whitehead S."/>
            <person name="Barrell B.G."/>
            <person name="Maskell D.J."/>
        </authorList>
    </citation>
    <scope>NUCLEOTIDE SEQUENCE [LARGE SCALE GENOMIC DNA]</scope>
    <source>
        <strain>ATCC BAA-588 / NCTC 13252 / RB50</strain>
    </source>
</reference>
<comment type="function">
    <text evidence="1">Displays ATPase and GTPase activities.</text>
</comment>
<comment type="similarity">
    <text evidence="1">Belongs to the RapZ-like family.</text>
</comment>
<feature type="chain" id="PRO_0000107691" description="Nucleotide-binding protein BB4511">
    <location>
        <begin position="1"/>
        <end position="290"/>
    </location>
</feature>
<feature type="binding site" evidence="1">
    <location>
        <begin position="9"/>
        <end position="16"/>
    </location>
    <ligand>
        <name>ATP</name>
        <dbReference type="ChEBI" id="CHEBI:30616"/>
    </ligand>
</feature>
<feature type="binding site" evidence="1">
    <location>
        <begin position="58"/>
        <end position="61"/>
    </location>
    <ligand>
        <name>GTP</name>
        <dbReference type="ChEBI" id="CHEBI:37565"/>
    </ligand>
</feature>
<accession>Q7WEX0</accession>
<organism>
    <name type="scientific">Bordetella bronchiseptica (strain ATCC BAA-588 / NCTC 13252 / RB50)</name>
    <name type="common">Alcaligenes bronchisepticus</name>
    <dbReference type="NCBI Taxonomy" id="257310"/>
    <lineage>
        <taxon>Bacteria</taxon>
        <taxon>Pseudomonadati</taxon>
        <taxon>Pseudomonadota</taxon>
        <taxon>Betaproteobacteria</taxon>
        <taxon>Burkholderiales</taxon>
        <taxon>Alcaligenaceae</taxon>
        <taxon>Bordetella</taxon>
    </lineage>
</organism>
<keyword id="KW-0067">ATP-binding</keyword>
<keyword id="KW-0342">GTP-binding</keyword>
<keyword id="KW-0547">Nucleotide-binding</keyword>
<gene>
    <name type="ordered locus">BB4511</name>
</gene>
<dbReference type="EMBL" id="BX640450">
    <property type="protein sequence ID" value="CAE34874.1"/>
    <property type="molecule type" value="Genomic_DNA"/>
</dbReference>
<dbReference type="SMR" id="Q7WEX0"/>
<dbReference type="KEGG" id="bbr:BB4511"/>
<dbReference type="eggNOG" id="COG1660">
    <property type="taxonomic scope" value="Bacteria"/>
</dbReference>
<dbReference type="HOGENOM" id="CLU_059558_1_1_4"/>
<dbReference type="Proteomes" id="UP000001027">
    <property type="component" value="Chromosome"/>
</dbReference>
<dbReference type="GO" id="GO:0005524">
    <property type="term" value="F:ATP binding"/>
    <property type="evidence" value="ECO:0007669"/>
    <property type="project" value="UniProtKB-UniRule"/>
</dbReference>
<dbReference type="GO" id="GO:0005525">
    <property type="term" value="F:GTP binding"/>
    <property type="evidence" value="ECO:0007669"/>
    <property type="project" value="UniProtKB-UniRule"/>
</dbReference>
<dbReference type="Gene3D" id="3.40.50.300">
    <property type="entry name" value="P-loop containing nucleotide triphosphate hydrolases"/>
    <property type="match status" value="1"/>
</dbReference>
<dbReference type="HAMAP" id="MF_00636">
    <property type="entry name" value="RapZ_like"/>
    <property type="match status" value="1"/>
</dbReference>
<dbReference type="InterPro" id="IPR027417">
    <property type="entry name" value="P-loop_NTPase"/>
</dbReference>
<dbReference type="InterPro" id="IPR005337">
    <property type="entry name" value="RapZ-like"/>
</dbReference>
<dbReference type="InterPro" id="IPR053930">
    <property type="entry name" value="RapZ-like_N"/>
</dbReference>
<dbReference type="InterPro" id="IPR053931">
    <property type="entry name" value="RapZ_C"/>
</dbReference>
<dbReference type="NCBIfam" id="NF003828">
    <property type="entry name" value="PRK05416.1"/>
    <property type="match status" value="1"/>
</dbReference>
<dbReference type="PANTHER" id="PTHR30448">
    <property type="entry name" value="RNASE ADAPTER PROTEIN RAPZ"/>
    <property type="match status" value="1"/>
</dbReference>
<dbReference type="PANTHER" id="PTHR30448:SF0">
    <property type="entry name" value="RNASE ADAPTER PROTEIN RAPZ"/>
    <property type="match status" value="1"/>
</dbReference>
<dbReference type="Pfam" id="PF22740">
    <property type="entry name" value="PapZ_C"/>
    <property type="match status" value="1"/>
</dbReference>
<dbReference type="Pfam" id="PF03668">
    <property type="entry name" value="RapZ-like_N"/>
    <property type="match status" value="1"/>
</dbReference>
<dbReference type="PIRSF" id="PIRSF005052">
    <property type="entry name" value="P-loopkin"/>
    <property type="match status" value="1"/>
</dbReference>
<dbReference type="SUPFAM" id="SSF52540">
    <property type="entry name" value="P-loop containing nucleoside triphosphate hydrolases"/>
    <property type="match status" value="1"/>
</dbReference>
<proteinExistence type="inferred from homology"/>
<name>Y4511_BORBR</name>